<dbReference type="EC" id="3.4.21.53" evidence="2"/>
<dbReference type="EMBL" id="AABR03113833">
    <property type="status" value="NOT_ANNOTATED_CDS"/>
    <property type="molecule type" value="Genomic_DNA"/>
</dbReference>
<dbReference type="EMBL" id="AABR03113838">
    <property type="status" value="NOT_ANNOTATED_CDS"/>
    <property type="molecule type" value="Genomic_DNA"/>
</dbReference>
<dbReference type="EMBL" id="AABR03114515">
    <property type="status" value="NOT_ANNOTATED_CDS"/>
    <property type="molecule type" value="Genomic_DNA"/>
</dbReference>
<dbReference type="EMBL" id="AABR03113506">
    <property type="status" value="NOT_ANNOTATED_CDS"/>
    <property type="molecule type" value="Genomic_DNA"/>
</dbReference>
<dbReference type="EMBL" id="BC103718">
    <property type="protein sequence ID" value="AAI03719.1"/>
    <property type="molecule type" value="mRNA"/>
</dbReference>
<dbReference type="RefSeq" id="NP_001386125.1">
    <property type="nucleotide sequence ID" value="NM_001399196.1"/>
</dbReference>
<dbReference type="RefSeq" id="XP_006255300.1">
    <property type="nucleotide sequence ID" value="XM_006255238.2"/>
</dbReference>
<dbReference type="SMR" id="Q3MIB4"/>
<dbReference type="FunCoup" id="Q3MIB4">
    <property type="interactions" value="1110"/>
</dbReference>
<dbReference type="STRING" id="10116.ENSRNOP00000020770"/>
<dbReference type="PhosphoSitePlus" id="Q3MIB4"/>
<dbReference type="jPOST" id="Q3MIB4"/>
<dbReference type="PaxDb" id="10116-ENSRNOP00000020770"/>
<dbReference type="Ensembl" id="ENSRNOT00000020770.8">
    <property type="protein sequence ID" value="ENSRNOP00000020770.4"/>
    <property type="gene ID" value="ENSRNOG00000015162.9"/>
</dbReference>
<dbReference type="GeneID" id="291922"/>
<dbReference type="AGR" id="RGD:1305466"/>
<dbReference type="RGD" id="1305466">
    <property type="gene designation" value="Lonp2"/>
</dbReference>
<dbReference type="eggNOG" id="KOG2004">
    <property type="taxonomic scope" value="Eukaryota"/>
</dbReference>
<dbReference type="GeneTree" id="ENSGT00530000063553"/>
<dbReference type="HOGENOM" id="CLU_004109_4_2_1"/>
<dbReference type="InParanoid" id="Q3MIB4"/>
<dbReference type="OMA" id="EYFLHQQ"/>
<dbReference type="OrthoDB" id="2411602at2759"/>
<dbReference type="PhylomeDB" id="Q3MIB4"/>
<dbReference type="TreeFam" id="TF317215"/>
<dbReference type="BRENDA" id="3.6.4.7">
    <property type="organism ID" value="5301"/>
</dbReference>
<dbReference type="Reactome" id="R-RNO-9033241">
    <property type="pathway name" value="Peroxisomal protein import"/>
</dbReference>
<dbReference type="PRO" id="PR:Q3MIB4"/>
<dbReference type="Proteomes" id="UP000002494">
    <property type="component" value="Chromosome 19"/>
</dbReference>
<dbReference type="Bgee" id="ENSRNOG00000015162">
    <property type="expression patterns" value="Expressed in liver and 19 other cell types or tissues"/>
</dbReference>
<dbReference type="ExpressionAtlas" id="Q3MIB4">
    <property type="expression patterns" value="baseline and differential"/>
</dbReference>
<dbReference type="GO" id="GO:0005737">
    <property type="term" value="C:cytoplasm"/>
    <property type="evidence" value="ECO:0000266"/>
    <property type="project" value="RGD"/>
</dbReference>
<dbReference type="GO" id="GO:0005634">
    <property type="term" value="C:nucleus"/>
    <property type="evidence" value="ECO:0000266"/>
    <property type="project" value="RGD"/>
</dbReference>
<dbReference type="GO" id="GO:0005782">
    <property type="term" value="C:peroxisomal matrix"/>
    <property type="evidence" value="ECO:0000314"/>
    <property type="project" value="RGD"/>
</dbReference>
<dbReference type="GO" id="GO:0005777">
    <property type="term" value="C:peroxisome"/>
    <property type="evidence" value="ECO:0000314"/>
    <property type="project" value="RGD"/>
</dbReference>
<dbReference type="GO" id="GO:0005524">
    <property type="term" value="F:ATP binding"/>
    <property type="evidence" value="ECO:0007669"/>
    <property type="project" value="UniProtKB-UniRule"/>
</dbReference>
<dbReference type="GO" id="GO:0016887">
    <property type="term" value="F:ATP hydrolysis activity"/>
    <property type="evidence" value="ECO:0007669"/>
    <property type="project" value="UniProtKB-UniRule"/>
</dbReference>
<dbReference type="GO" id="GO:0004176">
    <property type="term" value="F:ATP-dependent peptidase activity"/>
    <property type="evidence" value="ECO:0007669"/>
    <property type="project" value="UniProtKB-UniRule"/>
</dbReference>
<dbReference type="GO" id="GO:0019899">
    <property type="term" value="F:enzyme binding"/>
    <property type="evidence" value="ECO:0000266"/>
    <property type="project" value="RGD"/>
</dbReference>
<dbReference type="GO" id="GO:0008233">
    <property type="term" value="F:peptidase activity"/>
    <property type="evidence" value="ECO:0000266"/>
    <property type="project" value="RGD"/>
</dbReference>
<dbReference type="GO" id="GO:0002020">
    <property type="term" value="F:protease binding"/>
    <property type="evidence" value="ECO:0000266"/>
    <property type="project" value="RGD"/>
</dbReference>
<dbReference type="GO" id="GO:0004252">
    <property type="term" value="F:serine-type endopeptidase activity"/>
    <property type="evidence" value="ECO:0007669"/>
    <property type="project" value="UniProtKB-UniRule"/>
</dbReference>
<dbReference type="GO" id="GO:0016558">
    <property type="term" value="P:protein import into peroxisome matrix"/>
    <property type="evidence" value="ECO:0007669"/>
    <property type="project" value="UniProtKB-UniRule"/>
</dbReference>
<dbReference type="GO" id="GO:0016485">
    <property type="term" value="P:protein processing"/>
    <property type="evidence" value="ECO:0000266"/>
    <property type="project" value="RGD"/>
</dbReference>
<dbReference type="GO" id="GO:0006515">
    <property type="term" value="P:protein quality control for misfolded or incompletely synthesized proteins"/>
    <property type="evidence" value="ECO:0007669"/>
    <property type="project" value="UniProtKB-UniRule"/>
</dbReference>
<dbReference type="GO" id="GO:0006625">
    <property type="term" value="P:protein targeting to peroxisome"/>
    <property type="evidence" value="ECO:0000266"/>
    <property type="project" value="RGD"/>
</dbReference>
<dbReference type="GO" id="GO:0031998">
    <property type="term" value="P:regulation of fatty acid beta-oxidation"/>
    <property type="evidence" value="ECO:0000266"/>
    <property type="project" value="RGD"/>
</dbReference>
<dbReference type="CDD" id="cd19500">
    <property type="entry name" value="RecA-like_Lon"/>
    <property type="match status" value="1"/>
</dbReference>
<dbReference type="FunFam" id="1.10.8.60:FF:000046">
    <property type="entry name" value="Lon protease homolog 2, peroxisomal"/>
    <property type="match status" value="1"/>
</dbReference>
<dbReference type="FunFam" id="1.20.5.5270:FF:000003">
    <property type="entry name" value="Lon protease homolog 2, peroxisomal"/>
    <property type="match status" value="1"/>
</dbReference>
<dbReference type="FunFam" id="2.30.130.40:FF:000003">
    <property type="entry name" value="Lon protease homolog 2, peroxisomal"/>
    <property type="match status" value="1"/>
</dbReference>
<dbReference type="FunFam" id="3.30.230.10:FF:000019">
    <property type="entry name" value="Lon protease homolog 2, peroxisomal"/>
    <property type="match status" value="1"/>
</dbReference>
<dbReference type="FunFam" id="3.40.50.300:FF:000382">
    <property type="entry name" value="Lon protease homolog 2, peroxisomal"/>
    <property type="match status" value="1"/>
</dbReference>
<dbReference type="Gene3D" id="1.10.8.60">
    <property type="match status" value="1"/>
</dbReference>
<dbReference type="Gene3D" id="1.20.5.5270">
    <property type="match status" value="1"/>
</dbReference>
<dbReference type="Gene3D" id="3.30.230.10">
    <property type="match status" value="1"/>
</dbReference>
<dbReference type="Gene3D" id="2.30.130.40">
    <property type="entry name" value="LON domain-like"/>
    <property type="match status" value="1"/>
</dbReference>
<dbReference type="Gene3D" id="3.40.50.300">
    <property type="entry name" value="P-loop containing nucleotide triphosphate hydrolases"/>
    <property type="match status" value="1"/>
</dbReference>
<dbReference type="HAMAP" id="MF_03121">
    <property type="entry name" value="lonp2_euk"/>
    <property type="match status" value="1"/>
</dbReference>
<dbReference type="InterPro" id="IPR003593">
    <property type="entry name" value="AAA+_ATPase"/>
</dbReference>
<dbReference type="InterPro" id="IPR003959">
    <property type="entry name" value="ATPase_AAA_core"/>
</dbReference>
<dbReference type="InterPro" id="IPR004815">
    <property type="entry name" value="Lon_bac/euk-typ"/>
</dbReference>
<dbReference type="InterPro" id="IPR054594">
    <property type="entry name" value="Lon_lid"/>
</dbReference>
<dbReference type="InterPro" id="IPR008269">
    <property type="entry name" value="Lon_proteolytic"/>
</dbReference>
<dbReference type="InterPro" id="IPR027065">
    <property type="entry name" value="Lon_Prtase"/>
</dbReference>
<dbReference type="InterPro" id="IPR003111">
    <property type="entry name" value="Lon_prtase_N"/>
</dbReference>
<dbReference type="InterPro" id="IPR046336">
    <property type="entry name" value="Lon_prtase_N_sf"/>
</dbReference>
<dbReference type="InterPro" id="IPR027501">
    <property type="entry name" value="Lonp2_euk"/>
</dbReference>
<dbReference type="InterPro" id="IPR027417">
    <property type="entry name" value="P-loop_NTPase"/>
</dbReference>
<dbReference type="InterPro" id="IPR008268">
    <property type="entry name" value="Peptidase_S16_AS"/>
</dbReference>
<dbReference type="InterPro" id="IPR015947">
    <property type="entry name" value="PUA-like_sf"/>
</dbReference>
<dbReference type="InterPro" id="IPR020568">
    <property type="entry name" value="Ribosomal_Su5_D2-typ_SF"/>
</dbReference>
<dbReference type="InterPro" id="IPR014721">
    <property type="entry name" value="Ribsml_uS5_D2-typ_fold_subgr"/>
</dbReference>
<dbReference type="NCBIfam" id="TIGR00763">
    <property type="entry name" value="lon"/>
    <property type="match status" value="1"/>
</dbReference>
<dbReference type="PANTHER" id="PTHR10046">
    <property type="entry name" value="ATP DEPENDENT LON PROTEASE FAMILY MEMBER"/>
    <property type="match status" value="1"/>
</dbReference>
<dbReference type="Pfam" id="PF00004">
    <property type="entry name" value="AAA"/>
    <property type="match status" value="1"/>
</dbReference>
<dbReference type="Pfam" id="PF05362">
    <property type="entry name" value="Lon_C"/>
    <property type="match status" value="1"/>
</dbReference>
<dbReference type="Pfam" id="PF22667">
    <property type="entry name" value="Lon_lid"/>
    <property type="match status" value="1"/>
</dbReference>
<dbReference type="Pfam" id="PF02190">
    <property type="entry name" value="LON_substr_bdg"/>
    <property type="match status" value="1"/>
</dbReference>
<dbReference type="PIRSF" id="PIRSF001174">
    <property type="entry name" value="Lon_proteas"/>
    <property type="match status" value="1"/>
</dbReference>
<dbReference type="PRINTS" id="PR00830">
    <property type="entry name" value="ENDOLAPTASE"/>
</dbReference>
<dbReference type="SMART" id="SM00382">
    <property type="entry name" value="AAA"/>
    <property type="match status" value="1"/>
</dbReference>
<dbReference type="SMART" id="SM00464">
    <property type="entry name" value="LON"/>
    <property type="match status" value="1"/>
</dbReference>
<dbReference type="SUPFAM" id="SSF52540">
    <property type="entry name" value="P-loop containing nucleoside triphosphate hydrolases"/>
    <property type="match status" value="1"/>
</dbReference>
<dbReference type="SUPFAM" id="SSF88697">
    <property type="entry name" value="PUA domain-like"/>
    <property type="match status" value="1"/>
</dbReference>
<dbReference type="SUPFAM" id="SSF54211">
    <property type="entry name" value="Ribosomal protein S5 domain 2-like"/>
    <property type="match status" value="1"/>
</dbReference>
<dbReference type="PROSITE" id="PS51787">
    <property type="entry name" value="LON_N"/>
    <property type="match status" value="1"/>
</dbReference>
<dbReference type="PROSITE" id="PS51786">
    <property type="entry name" value="LON_PROTEOLYTIC"/>
    <property type="match status" value="1"/>
</dbReference>
<dbReference type="PROSITE" id="PS01046">
    <property type="entry name" value="LON_SER"/>
    <property type="match status" value="1"/>
</dbReference>
<sequence>MSSVNPIQIPSRLPLLLTHESVLLPGSTMRTSVDTARNLQLVRSRLLKGTSLQSTILGVIPNTPDPASDSQDLPPLHRIGTAALAVQVVGSNWPKPHYTLLITGLCRFQIVQVLKEKPYPVAEVEQLDRLEEFPNTCKTREELGELSEQFYRYSVQLVEMLDMSVPAVAKLRRLLDSLPREALPDILTSIIRTSNKEKLQILDAVSLEDRFKMTIPLLVRQIEGLKLLQKTRKPKQDDDKRVIAIRPIRRITHIPGALEDEEEEEDNDDIVMLEKKIRTSSMPEQAHKVCVKEIKRLKKMPQSMPEYALTRNYLELMVELPWNKSTTDRLDIRAARILLDNDHYAMEKLKRRVLEYLAVRQLKNNLKGPILCFVGPPGVGKTSVGRSVAKTLGREFHRIALGGVCDQSDIRGHRRTYVGSMPGRIINGLKTVGVNNPVFLLDEVDKLGKSLQGDPAAALLEVLDPEQNHNFTDHYLNVAFDLSQVLFIATANTTATIPPALLDRMEIIQVPGYTQEEKIEIAHRHLIPKQLEQHGLTPQQIQIPQLTTLAIITRYTREAGVRSLDRKFGAICRAVAVKVAEGQHKEAKLDRSDVADGEGCKEHVLEDAKPESIGDAADLALPPEMPILIDSHALKDILGPPLYELEVSERLSQPGVAIGLAWTPLGGKIMFVEASRMDGEGQLTLTGQLGDVMKESAHLAISWLRSNAKKYHLTNAFGSFDLLDNTDIHLHFPAGAVTKDGPSAGVTIVTCLASLFSGRLVRSDVAMTGEITLRGLVLPVGGIKDKVLAAHRAGLKHIIIPQRNEKDLEEIPSNVKQDLSFVTASCLDEVLNAAFDGGFTVKTRPGLTDSKL</sequence>
<comment type="function">
    <text evidence="2">ATP-dependent serine protease that mediates the selective degradation of misfolded and unassembled polypeptides in the peroxisomal matrix. Necessary for type 2 peroxisome targeting signal (PTS2)-containing protein processing and facilitates peroxisome matrix protein import. May indirectly regulate peroxisomal fatty acid beta-oxidation through degradation of the self-processed forms of TYSND1.</text>
</comment>
<comment type="catalytic activity">
    <reaction evidence="2">
        <text>Hydrolysis of proteins in presence of ATP.</text>
        <dbReference type="EC" id="3.4.21.53"/>
    </reaction>
</comment>
<comment type="subunit">
    <text evidence="1 2">Interacts with PEX5. Interacts with TYSND1 (By similarity). May interact with enzymes involved in beta-oxidation of fatty acids, including ACOX1/AOX (By similarity).</text>
</comment>
<comment type="subcellular location">
    <subcellularLocation>
        <location evidence="1 2">Peroxisome matrix</location>
    </subcellularLocation>
</comment>
<comment type="similarity">
    <text evidence="2">Belongs to the peptidase S16 family.</text>
</comment>
<reference key="1">
    <citation type="journal article" date="2004" name="Nature">
        <title>Genome sequence of the Brown Norway rat yields insights into mammalian evolution.</title>
        <authorList>
            <person name="Gibbs R.A."/>
            <person name="Weinstock G.M."/>
            <person name="Metzker M.L."/>
            <person name="Muzny D.M."/>
            <person name="Sodergren E.J."/>
            <person name="Scherer S."/>
            <person name="Scott G."/>
            <person name="Steffen D."/>
            <person name="Worley K.C."/>
            <person name="Burch P.E."/>
            <person name="Okwuonu G."/>
            <person name="Hines S."/>
            <person name="Lewis L."/>
            <person name="Deramo C."/>
            <person name="Delgado O."/>
            <person name="Dugan-Rocha S."/>
            <person name="Miner G."/>
            <person name="Morgan M."/>
            <person name="Hawes A."/>
            <person name="Gill R."/>
            <person name="Holt R.A."/>
            <person name="Adams M.D."/>
            <person name="Amanatides P.G."/>
            <person name="Baden-Tillson H."/>
            <person name="Barnstead M."/>
            <person name="Chin S."/>
            <person name="Evans C.A."/>
            <person name="Ferriera S."/>
            <person name="Fosler C."/>
            <person name="Glodek A."/>
            <person name="Gu Z."/>
            <person name="Jennings D."/>
            <person name="Kraft C.L."/>
            <person name="Nguyen T."/>
            <person name="Pfannkoch C.M."/>
            <person name="Sitter C."/>
            <person name="Sutton G.G."/>
            <person name="Venter J.C."/>
            <person name="Woodage T."/>
            <person name="Smith D."/>
            <person name="Lee H.-M."/>
            <person name="Gustafson E."/>
            <person name="Cahill P."/>
            <person name="Kana A."/>
            <person name="Doucette-Stamm L."/>
            <person name="Weinstock K."/>
            <person name="Fechtel K."/>
            <person name="Weiss R.B."/>
            <person name="Dunn D.M."/>
            <person name="Green E.D."/>
            <person name="Blakesley R.W."/>
            <person name="Bouffard G.G."/>
            <person name="De Jong P.J."/>
            <person name="Osoegawa K."/>
            <person name="Zhu B."/>
            <person name="Marra M."/>
            <person name="Schein J."/>
            <person name="Bosdet I."/>
            <person name="Fjell C."/>
            <person name="Jones S."/>
            <person name="Krzywinski M."/>
            <person name="Mathewson C."/>
            <person name="Siddiqui A."/>
            <person name="Wye N."/>
            <person name="McPherson J."/>
            <person name="Zhao S."/>
            <person name="Fraser C.M."/>
            <person name="Shetty J."/>
            <person name="Shatsman S."/>
            <person name="Geer K."/>
            <person name="Chen Y."/>
            <person name="Abramzon S."/>
            <person name="Nierman W.C."/>
            <person name="Havlak P.H."/>
            <person name="Chen R."/>
            <person name="Durbin K.J."/>
            <person name="Egan A."/>
            <person name="Ren Y."/>
            <person name="Song X.-Z."/>
            <person name="Li B."/>
            <person name="Liu Y."/>
            <person name="Qin X."/>
            <person name="Cawley S."/>
            <person name="Cooney A.J."/>
            <person name="D'Souza L.M."/>
            <person name="Martin K."/>
            <person name="Wu J.Q."/>
            <person name="Gonzalez-Garay M.L."/>
            <person name="Jackson A.R."/>
            <person name="Kalafus K.J."/>
            <person name="McLeod M.P."/>
            <person name="Milosavljevic A."/>
            <person name="Virk D."/>
            <person name="Volkov A."/>
            <person name="Wheeler D.A."/>
            <person name="Zhang Z."/>
            <person name="Bailey J.A."/>
            <person name="Eichler E.E."/>
            <person name="Tuzun E."/>
            <person name="Birney E."/>
            <person name="Mongin E."/>
            <person name="Ureta-Vidal A."/>
            <person name="Woodwark C."/>
            <person name="Zdobnov E."/>
            <person name="Bork P."/>
            <person name="Suyama M."/>
            <person name="Torrents D."/>
            <person name="Alexandersson M."/>
            <person name="Trask B.J."/>
            <person name="Young J.M."/>
            <person name="Huang H."/>
            <person name="Wang H."/>
            <person name="Xing H."/>
            <person name="Daniels S."/>
            <person name="Gietzen D."/>
            <person name="Schmidt J."/>
            <person name="Stevens K."/>
            <person name="Vitt U."/>
            <person name="Wingrove J."/>
            <person name="Camara F."/>
            <person name="Mar Alba M."/>
            <person name="Abril J.F."/>
            <person name="Guigo R."/>
            <person name="Smit A."/>
            <person name="Dubchak I."/>
            <person name="Rubin E.M."/>
            <person name="Couronne O."/>
            <person name="Poliakov A."/>
            <person name="Huebner N."/>
            <person name="Ganten D."/>
            <person name="Goesele C."/>
            <person name="Hummel O."/>
            <person name="Kreitler T."/>
            <person name="Lee Y.-A."/>
            <person name="Monti J."/>
            <person name="Schulz H."/>
            <person name="Zimdahl H."/>
            <person name="Himmelbauer H."/>
            <person name="Lehrach H."/>
            <person name="Jacob H.J."/>
            <person name="Bromberg S."/>
            <person name="Gullings-Handley J."/>
            <person name="Jensen-Seaman M.I."/>
            <person name="Kwitek A.E."/>
            <person name="Lazar J."/>
            <person name="Pasko D."/>
            <person name="Tonellato P.J."/>
            <person name="Twigger S."/>
            <person name="Ponting C.P."/>
            <person name="Duarte J.M."/>
            <person name="Rice S."/>
            <person name="Goodstadt L."/>
            <person name="Beatson S.A."/>
            <person name="Emes R.D."/>
            <person name="Winter E.E."/>
            <person name="Webber C."/>
            <person name="Brandt P."/>
            <person name="Nyakatura G."/>
            <person name="Adetobi M."/>
            <person name="Chiaromonte F."/>
            <person name="Elnitski L."/>
            <person name="Eswara P."/>
            <person name="Hardison R.C."/>
            <person name="Hou M."/>
            <person name="Kolbe D."/>
            <person name="Makova K."/>
            <person name="Miller W."/>
            <person name="Nekrutenko A."/>
            <person name="Riemer C."/>
            <person name="Schwartz S."/>
            <person name="Taylor J."/>
            <person name="Yang S."/>
            <person name="Zhang Y."/>
            <person name="Lindpaintner K."/>
            <person name="Andrews T.D."/>
            <person name="Caccamo M."/>
            <person name="Clamp M."/>
            <person name="Clarke L."/>
            <person name="Curwen V."/>
            <person name="Durbin R.M."/>
            <person name="Eyras E."/>
            <person name="Searle S.M."/>
            <person name="Cooper G.M."/>
            <person name="Batzoglou S."/>
            <person name="Brudno M."/>
            <person name="Sidow A."/>
            <person name="Stone E.A."/>
            <person name="Payseur B.A."/>
            <person name="Bourque G."/>
            <person name="Lopez-Otin C."/>
            <person name="Puente X.S."/>
            <person name="Chakrabarti K."/>
            <person name="Chatterji S."/>
            <person name="Dewey C."/>
            <person name="Pachter L."/>
            <person name="Bray N."/>
            <person name="Yap V.B."/>
            <person name="Caspi A."/>
            <person name="Tesler G."/>
            <person name="Pevzner P.A."/>
            <person name="Haussler D."/>
            <person name="Roskin K.M."/>
            <person name="Baertsch R."/>
            <person name="Clawson H."/>
            <person name="Furey T.S."/>
            <person name="Hinrichs A.S."/>
            <person name="Karolchik D."/>
            <person name="Kent W.J."/>
            <person name="Rosenbloom K.R."/>
            <person name="Trumbower H."/>
            <person name="Weirauch M."/>
            <person name="Cooper D.N."/>
            <person name="Stenson P.D."/>
            <person name="Ma B."/>
            <person name="Brent M."/>
            <person name="Arumugam M."/>
            <person name="Shteynberg D."/>
            <person name="Copley R.R."/>
            <person name="Taylor M.S."/>
            <person name="Riethman H."/>
            <person name="Mudunuri U."/>
            <person name="Peterson J."/>
            <person name="Guyer M."/>
            <person name="Felsenfeld A."/>
            <person name="Old S."/>
            <person name="Mockrin S."/>
            <person name="Collins F.S."/>
        </authorList>
    </citation>
    <scope>NUCLEOTIDE SEQUENCE [LARGE SCALE GENOMIC DNA]</scope>
    <source>
        <strain>Brown Norway</strain>
    </source>
</reference>
<reference key="2">
    <citation type="journal article" date="2004" name="Genome Res.">
        <title>The status, quality, and expansion of the NIH full-length cDNA project: the Mammalian Gene Collection (MGC).</title>
        <authorList>
            <consortium name="The MGC Project Team"/>
        </authorList>
    </citation>
    <scope>NUCLEOTIDE SEQUENCE [LARGE SCALE MRNA] OF 297-852</scope>
    <source>
        <tissue>Ovary</tissue>
    </source>
</reference>
<reference key="3">
    <citation type="journal article" date="2004" name="J. Biol. Chem.">
        <title>Proteomic analysis of rat liver peroxisome: presence of peroxisome-specific isozyme of Lon protease.</title>
        <authorList>
            <person name="Kikuchi M."/>
            <person name="Hatano N."/>
            <person name="Yokota S."/>
            <person name="Shimozawa N."/>
            <person name="Imanaka T."/>
            <person name="Taniguchi H."/>
        </authorList>
    </citation>
    <scope>IDENTIFICATION BY MASS SPECTROMETRY</scope>
    <scope>SUBCELLULAR LOCATION</scope>
</reference>
<evidence type="ECO:0000250" key="1">
    <source>
        <dbReference type="UniProtKB" id="Q86WA8"/>
    </source>
</evidence>
<evidence type="ECO:0000255" key="2">
    <source>
        <dbReference type="HAMAP-Rule" id="MF_03121"/>
    </source>
</evidence>
<evidence type="ECO:0000255" key="3">
    <source>
        <dbReference type="PROSITE-ProRule" id="PRU01122"/>
    </source>
</evidence>
<evidence type="ECO:0000255" key="4">
    <source>
        <dbReference type="PROSITE-ProRule" id="PRU01123"/>
    </source>
</evidence>
<protein>
    <recommendedName>
        <fullName evidence="2">Lon protease homolog 2, peroxisomal</fullName>
        <ecNumber evidence="2">3.4.21.53</ecNumber>
    </recommendedName>
    <alternativeName>
        <fullName evidence="2">Lon protease-like protein 2</fullName>
        <shortName evidence="2">Lon protease 2</shortName>
    </alternativeName>
    <alternativeName>
        <fullName evidence="2">Peroxisomal Lon protease</fullName>
    </alternativeName>
</protein>
<accession>Q3MIB4</accession>
<gene>
    <name type="primary">Lonp2</name>
</gene>
<feature type="initiator methionine" description="Removed" evidence="1">
    <location>
        <position position="1"/>
    </location>
</feature>
<feature type="chain" id="PRO_0000287642" description="Lon protease homolog 2, peroxisomal">
    <location>
        <begin position="2"/>
        <end position="852"/>
    </location>
</feature>
<feature type="domain" description="Lon N-terminal" evidence="4">
    <location>
        <begin position="13"/>
        <end position="222"/>
    </location>
</feature>
<feature type="domain" description="Lon proteolytic" evidence="3">
    <location>
        <begin position="651"/>
        <end position="837"/>
    </location>
</feature>
<feature type="short sequence motif" description="Microbody targeting signal" evidence="2">
    <location>
        <begin position="850"/>
        <end position="852"/>
    </location>
</feature>
<feature type="active site" evidence="2">
    <location>
        <position position="743"/>
    </location>
</feature>
<feature type="active site" evidence="2">
    <location>
        <position position="786"/>
    </location>
</feature>
<feature type="binding site" evidence="2">
    <location>
        <begin position="375"/>
        <end position="382"/>
    </location>
    <ligand>
        <name>ATP</name>
        <dbReference type="ChEBI" id="CHEBI:30616"/>
    </ligand>
</feature>
<feature type="modified residue" description="N-acetylserine" evidence="1">
    <location>
        <position position="2"/>
    </location>
</feature>
<name>LONP2_RAT</name>
<keyword id="KW-0007">Acetylation</keyword>
<keyword id="KW-0067">ATP-binding</keyword>
<keyword id="KW-0378">Hydrolase</keyword>
<keyword id="KW-0547">Nucleotide-binding</keyword>
<keyword id="KW-0576">Peroxisome</keyword>
<keyword id="KW-0645">Protease</keyword>
<keyword id="KW-1185">Reference proteome</keyword>
<keyword id="KW-0720">Serine protease</keyword>
<organism>
    <name type="scientific">Rattus norvegicus</name>
    <name type="common">Rat</name>
    <dbReference type="NCBI Taxonomy" id="10116"/>
    <lineage>
        <taxon>Eukaryota</taxon>
        <taxon>Metazoa</taxon>
        <taxon>Chordata</taxon>
        <taxon>Craniata</taxon>
        <taxon>Vertebrata</taxon>
        <taxon>Euteleostomi</taxon>
        <taxon>Mammalia</taxon>
        <taxon>Eutheria</taxon>
        <taxon>Euarchontoglires</taxon>
        <taxon>Glires</taxon>
        <taxon>Rodentia</taxon>
        <taxon>Myomorpha</taxon>
        <taxon>Muroidea</taxon>
        <taxon>Muridae</taxon>
        <taxon>Murinae</taxon>
        <taxon>Rattus</taxon>
    </lineage>
</organism>
<proteinExistence type="evidence at protein level"/>